<comment type="function">
    <text evidence="2">Binds lactose with high affinity. Strong inducer of T-cell apoptosis.</text>
</comment>
<comment type="tissue specificity">
    <text evidence="2">Predominantly and highly expressed in the placenta where it is localized mainly in the syncytiotrophoblast and in the endothelia of fetal vessels. Also detected in the amnion and chorionic trophoblasts in fetal membranes.</text>
</comment>
<dbReference type="EMBL" id="FJ613352">
    <property type="protein sequence ID" value="ACR09652.1"/>
    <property type="molecule type" value="mRNA"/>
</dbReference>
<dbReference type="EMBL" id="AC005515">
    <property type="status" value="NOT_ANNOTATED_CDS"/>
    <property type="molecule type" value="Genomic_DNA"/>
</dbReference>
<dbReference type="EMBL" id="AC093051">
    <property type="status" value="NOT_ANNOTATED_CDS"/>
    <property type="molecule type" value="Genomic_DNA"/>
</dbReference>
<dbReference type="CCDS" id="CCDS54267.1"/>
<dbReference type="RefSeq" id="NP_001177370.2">
    <property type="nucleotide sequence ID" value="NM_001190441.3"/>
</dbReference>
<dbReference type="PDB" id="6LJP">
    <property type="method" value="X-ray"/>
    <property type="resolution" value="2.00 A"/>
    <property type="chains" value="A=1-142"/>
</dbReference>
<dbReference type="PDB" id="6LJQ">
    <property type="method" value="X-ray"/>
    <property type="resolution" value="1.49 A"/>
    <property type="chains" value="A=1-142"/>
</dbReference>
<dbReference type="PDB" id="6LJR">
    <property type="method" value="X-ray"/>
    <property type="resolution" value="2.00 A"/>
    <property type="chains" value="A=1-142"/>
</dbReference>
<dbReference type="PDBsum" id="6LJP"/>
<dbReference type="PDBsum" id="6LJQ"/>
<dbReference type="PDBsum" id="6LJR"/>
<dbReference type="SMR" id="A8MUM7"/>
<dbReference type="FunCoup" id="A8MUM7">
    <property type="interactions" value="3"/>
</dbReference>
<dbReference type="STRING" id="9606.ENSP00000375904"/>
<dbReference type="UniLectin" id="A8MUM7"/>
<dbReference type="BioMuta" id="LGALS16"/>
<dbReference type="MassIVE" id="A8MUM7"/>
<dbReference type="PaxDb" id="9606-ENSP00000375904"/>
<dbReference type="PeptideAtlas" id="A8MUM7"/>
<dbReference type="DNASU" id="148003"/>
<dbReference type="Ensembl" id="ENST00000392051.4">
    <property type="protein sequence ID" value="ENSP00000375904.2"/>
    <property type="gene ID" value="ENSG00000249861.4"/>
</dbReference>
<dbReference type="GeneID" id="148003"/>
<dbReference type="KEGG" id="hsa:148003"/>
<dbReference type="MANE-Select" id="ENST00000392051.4">
    <property type="protein sequence ID" value="ENSP00000375904.2"/>
    <property type="RefSeq nucleotide sequence ID" value="NM_001190441.3"/>
    <property type="RefSeq protein sequence ID" value="NP_001177370.2"/>
</dbReference>
<dbReference type="UCSC" id="uc021uun.2">
    <property type="organism name" value="human"/>
</dbReference>
<dbReference type="AGR" id="HGNC:40039"/>
<dbReference type="CTD" id="148003"/>
<dbReference type="DisGeNET" id="148003"/>
<dbReference type="GeneCards" id="LGALS16"/>
<dbReference type="HGNC" id="HGNC:40039">
    <property type="gene designation" value="LGALS16"/>
</dbReference>
<dbReference type="HPA" id="ENSG00000249861">
    <property type="expression patterns" value="Tissue enriched (placenta)"/>
</dbReference>
<dbReference type="neXtProt" id="NX_A8MUM7"/>
<dbReference type="OpenTargets" id="ENSG00000249861"/>
<dbReference type="VEuPathDB" id="HostDB:ENSG00000249861"/>
<dbReference type="eggNOG" id="KOG3587">
    <property type="taxonomic scope" value="Eukaryota"/>
</dbReference>
<dbReference type="GeneTree" id="ENSGT00940000162909"/>
<dbReference type="HOGENOM" id="CLU_037794_4_0_1"/>
<dbReference type="InParanoid" id="A8MUM7"/>
<dbReference type="OMA" id="SREFGVW"/>
<dbReference type="OrthoDB" id="5795596at2759"/>
<dbReference type="PAN-GO" id="A8MUM7">
    <property type="GO annotations" value="0 GO annotations based on evolutionary models"/>
</dbReference>
<dbReference type="PhylomeDB" id="A8MUM7"/>
<dbReference type="TreeFam" id="TF315551"/>
<dbReference type="PathwayCommons" id="A8MUM7"/>
<dbReference type="BioGRID-ORCS" id="148003">
    <property type="hits" value="5 hits in 1132 CRISPR screens"/>
</dbReference>
<dbReference type="GenomeRNAi" id="148003"/>
<dbReference type="Pharos" id="A8MUM7">
    <property type="development level" value="Tbio"/>
</dbReference>
<dbReference type="PRO" id="PR:A8MUM7"/>
<dbReference type="Proteomes" id="UP000005640">
    <property type="component" value="Chromosome 19"/>
</dbReference>
<dbReference type="RNAct" id="A8MUM7">
    <property type="molecule type" value="protein"/>
</dbReference>
<dbReference type="Bgee" id="ENSG00000249861">
    <property type="expression patterns" value="Expressed in placenta and 17 other cell types or tissues"/>
</dbReference>
<dbReference type="ExpressionAtlas" id="A8MUM7">
    <property type="expression patterns" value="baseline and differential"/>
</dbReference>
<dbReference type="GO" id="GO:0030246">
    <property type="term" value="F:carbohydrate binding"/>
    <property type="evidence" value="ECO:0000318"/>
    <property type="project" value="GO_Central"/>
</dbReference>
<dbReference type="GO" id="GO:0030395">
    <property type="term" value="F:lactose binding"/>
    <property type="evidence" value="ECO:0000314"/>
    <property type="project" value="UniProtKB"/>
</dbReference>
<dbReference type="GO" id="GO:0006915">
    <property type="term" value="P:apoptotic process"/>
    <property type="evidence" value="ECO:0007669"/>
    <property type="project" value="UniProtKB-KW"/>
</dbReference>
<dbReference type="GO" id="GO:0070234">
    <property type="term" value="P:positive regulation of T cell apoptotic process"/>
    <property type="evidence" value="ECO:0000314"/>
    <property type="project" value="UniProtKB"/>
</dbReference>
<dbReference type="CDD" id="cd00070">
    <property type="entry name" value="GLECT"/>
    <property type="match status" value="1"/>
</dbReference>
<dbReference type="FunFam" id="2.60.120.200:FF:000176">
    <property type="entry name" value="Galectin"/>
    <property type="match status" value="1"/>
</dbReference>
<dbReference type="Gene3D" id="2.60.120.200">
    <property type="match status" value="1"/>
</dbReference>
<dbReference type="InterPro" id="IPR013320">
    <property type="entry name" value="ConA-like_dom_sf"/>
</dbReference>
<dbReference type="InterPro" id="IPR044156">
    <property type="entry name" value="Galectin-like"/>
</dbReference>
<dbReference type="InterPro" id="IPR001079">
    <property type="entry name" value="Galectin_CRD"/>
</dbReference>
<dbReference type="PANTHER" id="PTHR11346">
    <property type="entry name" value="GALECTIN"/>
    <property type="match status" value="1"/>
</dbReference>
<dbReference type="PANTHER" id="PTHR11346:SF166">
    <property type="entry name" value="GALECTIN-16"/>
    <property type="match status" value="1"/>
</dbReference>
<dbReference type="Pfam" id="PF00337">
    <property type="entry name" value="Gal-bind_lectin"/>
    <property type="match status" value="1"/>
</dbReference>
<dbReference type="SMART" id="SM00908">
    <property type="entry name" value="Gal-bind_lectin"/>
    <property type="match status" value="1"/>
</dbReference>
<dbReference type="SMART" id="SM00276">
    <property type="entry name" value="GLECT"/>
    <property type="match status" value="1"/>
</dbReference>
<dbReference type="SUPFAM" id="SSF49899">
    <property type="entry name" value="Concanavalin A-like lectins/glucanases"/>
    <property type="match status" value="1"/>
</dbReference>
<dbReference type="PROSITE" id="PS51304">
    <property type="entry name" value="GALECTIN"/>
    <property type="match status" value="1"/>
</dbReference>
<protein>
    <recommendedName>
        <fullName evidence="4">Galectin-16</fullName>
    </recommendedName>
</protein>
<sequence length="142" mass="16600">MSFLTVPYKLPVSLSVGSCVIIKGTLIDSSINEPQLQVDFYTEMNEDSEIAFHLRVHLGRRVVMNSREFGIWMLEENLHYVPFEDGKPFDLRIYVCHNEYEVKVNGEYIYAFVHRIPPSYVKMIQVWRDVSLDSVLVNNGRR</sequence>
<reference evidence="3 4" key="1">
    <citation type="journal article" date="2009" name="Proc. Natl. Acad. Sci. U.S.A.">
        <title>A primate subfamily of galectins expressed at the maternal-fetal interface that promote immune cell death.</title>
        <authorList>
            <person name="Than N.G."/>
            <person name="Romero R."/>
            <person name="Goodman M."/>
            <person name="Weckle A."/>
            <person name="Xing J."/>
            <person name="Dong Z."/>
            <person name="Xu Y."/>
            <person name="Tarquini F."/>
            <person name="Szilagyi A."/>
            <person name="Gal P."/>
            <person name="Hou Z."/>
            <person name="Tarca A.L."/>
            <person name="Kim C.J."/>
            <person name="Kim J.S."/>
            <person name="Haidarian S."/>
            <person name="Uddin M."/>
            <person name="Bohn H."/>
            <person name="Benirschke K."/>
            <person name="Santolaya-Forgas J."/>
            <person name="Grossman L.I."/>
            <person name="Erez O."/>
            <person name="Hassan S.S."/>
            <person name="Zavodszky P."/>
            <person name="Papp Z."/>
            <person name="Wildman D.E."/>
        </authorList>
    </citation>
    <scope>NUCLEOTIDE SEQUENCE [MRNA]</scope>
    <scope>FUNCTION</scope>
    <scope>TISSUE SPECIFICITY</scope>
    <source>
        <tissue evidence="4">Placenta</tissue>
    </source>
</reference>
<reference key="2">
    <citation type="journal article" date="2004" name="Nature">
        <title>The DNA sequence and biology of human chromosome 19.</title>
        <authorList>
            <person name="Grimwood J."/>
            <person name="Gordon L.A."/>
            <person name="Olsen A.S."/>
            <person name="Terry A."/>
            <person name="Schmutz J."/>
            <person name="Lamerdin J.E."/>
            <person name="Hellsten U."/>
            <person name="Goodstein D."/>
            <person name="Couronne O."/>
            <person name="Tran-Gyamfi M."/>
            <person name="Aerts A."/>
            <person name="Altherr M."/>
            <person name="Ashworth L."/>
            <person name="Bajorek E."/>
            <person name="Black S."/>
            <person name="Branscomb E."/>
            <person name="Caenepeel S."/>
            <person name="Carrano A.V."/>
            <person name="Caoile C."/>
            <person name="Chan Y.M."/>
            <person name="Christensen M."/>
            <person name="Cleland C.A."/>
            <person name="Copeland A."/>
            <person name="Dalin E."/>
            <person name="Dehal P."/>
            <person name="Denys M."/>
            <person name="Detter J.C."/>
            <person name="Escobar J."/>
            <person name="Flowers D."/>
            <person name="Fotopulos D."/>
            <person name="Garcia C."/>
            <person name="Georgescu A.M."/>
            <person name="Glavina T."/>
            <person name="Gomez M."/>
            <person name="Gonzales E."/>
            <person name="Groza M."/>
            <person name="Hammon N."/>
            <person name="Hawkins T."/>
            <person name="Haydu L."/>
            <person name="Ho I."/>
            <person name="Huang W."/>
            <person name="Israni S."/>
            <person name="Jett J."/>
            <person name="Kadner K."/>
            <person name="Kimball H."/>
            <person name="Kobayashi A."/>
            <person name="Larionov V."/>
            <person name="Leem S.-H."/>
            <person name="Lopez F."/>
            <person name="Lou Y."/>
            <person name="Lowry S."/>
            <person name="Malfatti S."/>
            <person name="Martinez D."/>
            <person name="McCready P.M."/>
            <person name="Medina C."/>
            <person name="Morgan J."/>
            <person name="Nelson K."/>
            <person name="Nolan M."/>
            <person name="Ovcharenko I."/>
            <person name="Pitluck S."/>
            <person name="Pollard M."/>
            <person name="Popkie A.P."/>
            <person name="Predki P."/>
            <person name="Quan G."/>
            <person name="Ramirez L."/>
            <person name="Rash S."/>
            <person name="Retterer J."/>
            <person name="Rodriguez A."/>
            <person name="Rogers S."/>
            <person name="Salamov A."/>
            <person name="Salazar A."/>
            <person name="She X."/>
            <person name="Smith D."/>
            <person name="Slezak T."/>
            <person name="Solovyev V."/>
            <person name="Thayer N."/>
            <person name="Tice H."/>
            <person name="Tsai M."/>
            <person name="Ustaszewska A."/>
            <person name="Vo N."/>
            <person name="Wagner M."/>
            <person name="Wheeler J."/>
            <person name="Wu K."/>
            <person name="Xie G."/>
            <person name="Yang J."/>
            <person name="Dubchak I."/>
            <person name="Furey T.S."/>
            <person name="DeJong P."/>
            <person name="Dickson M."/>
            <person name="Gordon D."/>
            <person name="Eichler E.E."/>
            <person name="Pennacchio L.A."/>
            <person name="Richardson P."/>
            <person name="Stubbs L."/>
            <person name="Rokhsar D.S."/>
            <person name="Myers R.M."/>
            <person name="Rubin E.M."/>
            <person name="Lucas S.M."/>
        </authorList>
    </citation>
    <scope>NUCLEOTIDE SEQUENCE [LARGE SCALE GENOMIC DNA]</scope>
</reference>
<accession>A8MUM7</accession>
<accession>C5HZ26</accession>
<evidence type="ECO:0000255" key="1">
    <source>
        <dbReference type="PROSITE-ProRule" id="PRU00639"/>
    </source>
</evidence>
<evidence type="ECO:0000269" key="2">
    <source>
    </source>
</evidence>
<evidence type="ECO:0000305" key="3"/>
<evidence type="ECO:0000312" key="4">
    <source>
        <dbReference type="EMBL" id="ACR09652.1"/>
    </source>
</evidence>
<evidence type="ECO:0007829" key="5">
    <source>
        <dbReference type="PDB" id="6LJQ"/>
    </source>
</evidence>
<feature type="chain" id="PRO_0000413535" description="Galectin-16">
    <location>
        <begin position="1"/>
        <end position="142"/>
    </location>
</feature>
<feature type="domain" description="Galectin" evidence="1">
    <location>
        <begin position="6"/>
        <end position="138"/>
    </location>
</feature>
<feature type="sequence variant" id="VAR_065877" description="In dbSNP:rs1860134.">
    <original>H</original>
    <variation>L</variation>
    <location>
        <position position="97"/>
    </location>
</feature>
<feature type="strand" evidence="5">
    <location>
        <begin position="6"/>
        <end position="11"/>
    </location>
</feature>
<feature type="strand" evidence="5">
    <location>
        <begin position="19"/>
        <end position="25"/>
    </location>
</feature>
<feature type="strand" evidence="5">
    <location>
        <begin position="31"/>
        <end position="33"/>
    </location>
</feature>
<feature type="strand" evidence="5">
    <location>
        <begin position="35"/>
        <end position="45"/>
    </location>
</feature>
<feature type="strand" evidence="5">
    <location>
        <begin position="50"/>
        <end position="57"/>
    </location>
</feature>
<feature type="turn" evidence="5">
    <location>
        <begin position="58"/>
        <end position="60"/>
    </location>
</feature>
<feature type="strand" evidence="5">
    <location>
        <begin position="61"/>
        <end position="68"/>
    </location>
</feature>
<feature type="strand" evidence="5">
    <location>
        <begin position="76"/>
        <end position="79"/>
    </location>
</feature>
<feature type="strand" evidence="5">
    <location>
        <begin position="87"/>
        <end position="95"/>
    </location>
</feature>
<feature type="strand" evidence="5">
    <location>
        <begin position="97"/>
        <end position="104"/>
    </location>
</feature>
<feature type="strand" evidence="5">
    <location>
        <begin position="107"/>
        <end position="113"/>
    </location>
</feature>
<feature type="helix" evidence="5">
    <location>
        <begin position="118"/>
        <end position="120"/>
    </location>
</feature>
<feature type="strand" evidence="5">
    <location>
        <begin position="123"/>
        <end position="129"/>
    </location>
</feature>
<feature type="strand" evidence="5">
    <location>
        <begin position="131"/>
        <end position="138"/>
    </location>
</feature>
<proteinExistence type="evidence at protein level"/>
<name>LEG16_HUMAN</name>
<keyword id="KW-0002">3D-structure</keyword>
<keyword id="KW-0053">Apoptosis</keyword>
<keyword id="KW-0430">Lectin</keyword>
<keyword id="KW-1185">Reference proteome</keyword>
<organism>
    <name type="scientific">Homo sapiens</name>
    <name type="common">Human</name>
    <dbReference type="NCBI Taxonomy" id="9606"/>
    <lineage>
        <taxon>Eukaryota</taxon>
        <taxon>Metazoa</taxon>
        <taxon>Chordata</taxon>
        <taxon>Craniata</taxon>
        <taxon>Vertebrata</taxon>
        <taxon>Euteleostomi</taxon>
        <taxon>Mammalia</taxon>
        <taxon>Eutheria</taxon>
        <taxon>Euarchontoglires</taxon>
        <taxon>Primates</taxon>
        <taxon>Haplorrhini</taxon>
        <taxon>Catarrhini</taxon>
        <taxon>Hominidae</taxon>
        <taxon>Homo</taxon>
    </lineage>
</organism>
<gene>
    <name evidence="4" type="primary">LGALS16</name>
</gene>